<feature type="chain" id="PRO_0000300842" description="Chalcone--flavanone isomerase 1">
    <location>
        <begin position="1"/>
        <end position="226"/>
    </location>
</feature>
<feature type="binding site" evidence="1">
    <location>
        <position position="52"/>
    </location>
    <ligand>
        <name>substrate</name>
    </ligand>
</feature>
<feature type="binding site" evidence="1">
    <location>
        <position position="117"/>
    </location>
    <ligand>
        <name>substrate</name>
    </ligand>
</feature>
<feature type="binding site" evidence="1">
    <location>
        <position position="194"/>
    </location>
    <ligand>
        <name>substrate</name>
    </ligand>
</feature>
<feature type="site" description="Important for catalytic activity" evidence="1">
    <location>
        <position position="110"/>
    </location>
</feature>
<feature type="splice variant" id="VSP_027872" description="In isoform 2." evidence="3">
    <original>LAERLPIVMNQGLLLTGN</original>
    <variation>SFG</variation>
    <location>
        <begin position="209"/>
        <end position="226"/>
    </location>
</feature>
<protein>
    <recommendedName>
        <fullName>Chalcone--flavanone isomerase 1</fullName>
        <shortName>Chalcone isomerase 1</shortName>
        <ecNumber>5.5.1.6</ecNumber>
    </recommendedName>
</protein>
<accession>Q8H0G2</accession>
<accession>Q84RQ2</accession>
<gene>
    <name type="primary">CHI1</name>
</gene>
<dbReference type="EC" id="5.5.1.6"/>
<dbReference type="EMBL" id="AB054801">
    <property type="protein sequence ID" value="BAC53983.1"/>
    <property type="molecule type" value="mRNA"/>
</dbReference>
<dbReference type="EMBL" id="AJ548840">
    <property type="protein sequence ID" value="CAD69022.1"/>
    <property type="molecule type" value="mRNA"/>
</dbReference>
<dbReference type="SMR" id="Q8H0G2"/>
<dbReference type="ProMEX" id="Q8H0G2"/>
<dbReference type="OMA" id="WGCKTTE"/>
<dbReference type="OrthoDB" id="1903537at2759"/>
<dbReference type="UniPathway" id="UPA00154"/>
<dbReference type="GO" id="GO:0045430">
    <property type="term" value="F:chalcone isomerase activity"/>
    <property type="evidence" value="ECO:0007669"/>
    <property type="project" value="UniProtKB-EC"/>
</dbReference>
<dbReference type="GO" id="GO:0009813">
    <property type="term" value="P:flavonoid biosynthetic process"/>
    <property type="evidence" value="ECO:0007669"/>
    <property type="project" value="UniProtKB-UniPathway"/>
</dbReference>
<dbReference type="Gene3D" id="1.10.890.20">
    <property type="match status" value="1"/>
</dbReference>
<dbReference type="Gene3D" id="3.50.70.10">
    <property type="match status" value="1"/>
</dbReference>
<dbReference type="InterPro" id="IPR044164">
    <property type="entry name" value="CFI"/>
</dbReference>
<dbReference type="InterPro" id="IPR016087">
    <property type="entry name" value="Chalcone_isomerase"/>
</dbReference>
<dbReference type="InterPro" id="IPR016088">
    <property type="entry name" value="Chalcone_isomerase_3-sand"/>
</dbReference>
<dbReference type="InterPro" id="IPR016089">
    <property type="entry name" value="Chalcone_isomerase_bundle_sf"/>
</dbReference>
<dbReference type="InterPro" id="IPR036298">
    <property type="entry name" value="Chalcone_isomerase_sf"/>
</dbReference>
<dbReference type="PANTHER" id="PTHR28039:SF10">
    <property type="entry name" value="CHALCONE--FLAVANONE ISOMERASE 1A"/>
    <property type="match status" value="1"/>
</dbReference>
<dbReference type="PANTHER" id="PTHR28039">
    <property type="entry name" value="CHALCONE--FLAVONONE ISOMERASE 1-RELATED"/>
    <property type="match status" value="1"/>
</dbReference>
<dbReference type="Pfam" id="PF02431">
    <property type="entry name" value="Chalcone"/>
    <property type="match status" value="1"/>
</dbReference>
<dbReference type="SUPFAM" id="SSF54626">
    <property type="entry name" value="Chalcone isomerase"/>
    <property type="match status" value="1"/>
</dbReference>
<keyword id="KW-0025">Alternative splicing</keyword>
<keyword id="KW-0284">Flavonoid biosynthesis</keyword>
<keyword id="KW-0413">Isomerase</keyword>
<name>CFI1_LOTJA</name>
<sequence length="226" mass="24431">MAPAKGSSLTPIQVENLQFPASVTSPATAKSYFLGGAGERGLTIEGKFIKFTGIGVYLEDTAVDSLATKWKGKSSQELQDSLDFFRDIISSPSEKLIRGSKLRPLSGVEYSRKVMENCVAHMKSAGTYGEAEATAIEKFAEAFRKVDFPPGSSVFYRQSTDGKLGLSFSLDDTIPEEEAVVIENKALSEAVLETMIGEHAVSPDLKRCLAERLPIVMNQGLLLTGN</sequence>
<evidence type="ECO:0000250" key="1"/>
<evidence type="ECO:0000269" key="2">
    <source>
    </source>
</evidence>
<evidence type="ECO:0000303" key="3">
    <source ref="2"/>
</evidence>
<evidence type="ECO:0000305" key="4"/>
<organism>
    <name type="scientific">Lotus japonicus</name>
    <name type="common">Lotus corniculatus var. japonicus</name>
    <dbReference type="NCBI Taxonomy" id="34305"/>
    <lineage>
        <taxon>Eukaryota</taxon>
        <taxon>Viridiplantae</taxon>
        <taxon>Streptophyta</taxon>
        <taxon>Embryophyta</taxon>
        <taxon>Tracheophyta</taxon>
        <taxon>Spermatophyta</taxon>
        <taxon>Magnoliopsida</taxon>
        <taxon>eudicotyledons</taxon>
        <taxon>Gunneridae</taxon>
        <taxon>Pentapetalae</taxon>
        <taxon>rosids</taxon>
        <taxon>fabids</taxon>
        <taxon>Fabales</taxon>
        <taxon>Fabaceae</taxon>
        <taxon>Papilionoideae</taxon>
        <taxon>50 kb inversion clade</taxon>
        <taxon>NPAAA clade</taxon>
        <taxon>Hologalegina</taxon>
        <taxon>robinioid clade</taxon>
        <taxon>Loteae</taxon>
        <taxon>Lotus</taxon>
    </lineage>
</organism>
<reference key="1">
    <citation type="journal article" date="2003" name="Plant Physiol.">
        <title>A cluster of genes encodes the two types of chalcone isomerase involved in the biosynthesis of general flavonoids and legume-specific 5-deoxy(iso)flavonoids in Lotus japonicus.</title>
        <authorList>
            <person name="Shimada N."/>
            <person name="Aoki T."/>
            <person name="Sato S."/>
            <person name="Nakamura Y."/>
            <person name="Tabata S."/>
            <person name="Ayabe S."/>
        </authorList>
    </citation>
    <scope>NUCLEOTIDE SEQUENCE [MRNA] (ISOFORM 1)</scope>
    <scope>FUNCTION</scope>
    <source>
        <strain>cv. Gifu / B-129</strain>
        <tissue>Root</tissue>
    </source>
</reference>
<reference key="2">
    <citation type="submission" date="2003-03" db="EMBL/GenBank/DDBJ databases">
        <title>Lotus japonicus nodule chalcone isomerase.</title>
        <authorList>
            <person name="Flemetakis E."/>
            <person name="Katinakis P."/>
        </authorList>
    </citation>
    <scope>NUCLEOTIDE SEQUENCE [MRNA] (ISOFORM 2)</scope>
    <source>
        <tissue>Root nodule</tissue>
    </source>
</reference>
<comment type="function">
    <text evidence="2">Catalyzes the intramolecular cyclization of bicyclic chalcones into tricyclic (S)-flavanones. Responsible for the isomerization of 4,2',4',6'-tetrahydroxychalcone (also termed chalcone) into naringenin.</text>
</comment>
<comment type="catalytic activity">
    <reaction>
        <text>a chalcone = a flavanone.</text>
        <dbReference type="EC" id="5.5.1.6"/>
    </reaction>
</comment>
<comment type="pathway">
    <text>Secondary metabolite biosynthesis; flavonoid biosynthesis.</text>
</comment>
<comment type="alternative products">
    <event type="alternative splicing"/>
    <isoform>
        <id>Q8H0G2-1</id>
        <name>1</name>
        <sequence type="displayed"/>
    </isoform>
    <isoform>
        <id>Q8H0G2-2</id>
        <name>2</name>
        <sequence type="described" ref="VSP_027872"/>
    </isoform>
</comment>
<comment type="miscellaneous">
    <text>Part of the biosynthetic pathway for all classes of flavonoids, a large class of secondary plant metabolites, many of which are brightly colored.</text>
</comment>
<comment type="similarity">
    <text evidence="4">Belongs to the chalcone isomerase family.</text>
</comment>
<proteinExistence type="evidence at transcript level"/>